<sequence length="627" mass="70237">MEGLAGYVYKAASEGKVLTLAALLLNRSESDIRYLLGYVSQQGGQRSTPLIIAARNGHAKVVRLLLEHYRVQTQQTGTVRFDGYVIDGATALWCAAGAGHFEVVKLLVSHGANVNHTTVTNSTPLRAACFDGRLDIVKYLVENNANISIANKYDNTCLMIAAYKGHTDVVRYLLEQRADPNAKAHCGATALHFAAEAGHIDIVKELIKWRAAIVVNGHGMTPLKVAAESCKADVVELLLSHADCDRRSRIEALELLGASFANDRENYDIMKTYHYLYLAMLERFQDGDNILEKEVLPPIHAYGNRTECRNPQELEAIRQDRDALHMEGLIVRERILGADNIDVSHPIIYRGAVYADNMEFEQCIKLWLHALHLRQKGNRNTHKDLLRFAQVFSQMIHLNEAVKAPDIECVLRCSVLEIEQSMNRVKNISDADVHSAMDNYECNLYTFLYLVCISTKTQCSEEDQCRINKQIYNLIHLDPRTREGFTLLHLAVNSNTPVDDFHTNDVCSFPNALVTKLLLDCGAEVNAVDNEGNSALHIIVQYNRPISDFLTLHSIIISLVEAGAHTDMTNKQNKTPLDKSTTGVSEILLKTQMKMSLKCLAARAVRANDINYQDQIPRTLEEFVGFH</sequence>
<accession>P0C6P7</accession>
<reference key="1">
    <citation type="journal article" date="2004" name="Nature">
        <title>Genome sequence of the Brown Norway rat yields insights into mammalian evolution.</title>
        <authorList>
            <person name="Gibbs R.A."/>
            <person name="Weinstock G.M."/>
            <person name="Metzker M.L."/>
            <person name="Muzny D.M."/>
            <person name="Sodergren E.J."/>
            <person name="Scherer S."/>
            <person name="Scott G."/>
            <person name="Steffen D."/>
            <person name="Worley K.C."/>
            <person name="Burch P.E."/>
            <person name="Okwuonu G."/>
            <person name="Hines S."/>
            <person name="Lewis L."/>
            <person name="Deramo C."/>
            <person name="Delgado O."/>
            <person name="Dugan-Rocha S."/>
            <person name="Miner G."/>
            <person name="Morgan M."/>
            <person name="Hawes A."/>
            <person name="Gill R."/>
            <person name="Holt R.A."/>
            <person name="Adams M.D."/>
            <person name="Amanatides P.G."/>
            <person name="Baden-Tillson H."/>
            <person name="Barnstead M."/>
            <person name="Chin S."/>
            <person name="Evans C.A."/>
            <person name="Ferriera S."/>
            <person name="Fosler C."/>
            <person name="Glodek A."/>
            <person name="Gu Z."/>
            <person name="Jennings D."/>
            <person name="Kraft C.L."/>
            <person name="Nguyen T."/>
            <person name="Pfannkoch C.M."/>
            <person name="Sitter C."/>
            <person name="Sutton G.G."/>
            <person name="Venter J.C."/>
            <person name="Woodage T."/>
            <person name="Smith D."/>
            <person name="Lee H.-M."/>
            <person name="Gustafson E."/>
            <person name="Cahill P."/>
            <person name="Kana A."/>
            <person name="Doucette-Stamm L."/>
            <person name="Weinstock K."/>
            <person name="Fechtel K."/>
            <person name="Weiss R.B."/>
            <person name="Dunn D.M."/>
            <person name="Green E.D."/>
            <person name="Blakesley R.W."/>
            <person name="Bouffard G.G."/>
            <person name="De Jong P.J."/>
            <person name="Osoegawa K."/>
            <person name="Zhu B."/>
            <person name="Marra M."/>
            <person name="Schein J."/>
            <person name="Bosdet I."/>
            <person name="Fjell C."/>
            <person name="Jones S."/>
            <person name="Krzywinski M."/>
            <person name="Mathewson C."/>
            <person name="Siddiqui A."/>
            <person name="Wye N."/>
            <person name="McPherson J."/>
            <person name="Zhao S."/>
            <person name="Fraser C.M."/>
            <person name="Shetty J."/>
            <person name="Shatsman S."/>
            <person name="Geer K."/>
            <person name="Chen Y."/>
            <person name="Abramzon S."/>
            <person name="Nierman W.C."/>
            <person name="Havlak P.H."/>
            <person name="Chen R."/>
            <person name="Durbin K.J."/>
            <person name="Egan A."/>
            <person name="Ren Y."/>
            <person name="Song X.-Z."/>
            <person name="Li B."/>
            <person name="Liu Y."/>
            <person name="Qin X."/>
            <person name="Cawley S."/>
            <person name="Cooney A.J."/>
            <person name="D'Souza L.M."/>
            <person name="Martin K."/>
            <person name="Wu J.Q."/>
            <person name="Gonzalez-Garay M.L."/>
            <person name="Jackson A.R."/>
            <person name="Kalafus K.J."/>
            <person name="McLeod M.P."/>
            <person name="Milosavljevic A."/>
            <person name="Virk D."/>
            <person name="Volkov A."/>
            <person name="Wheeler D.A."/>
            <person name="Zhang Z."/>
            <person name="Bailey J.A."/>
            <person name="Eichler E.E."/>
            <person name="Tuzun E."/>
            <person name="Birney E."/>
            <person name="Mongin E."/>
            <person name="Ureta-Vidal A."/>
            <person name="Woodwark C."/>
            <person name="Zdobnov E."/>
            <person name="Bork P."/>
            <person name="Suyama M."/>
            <person name="Torrents D."/>
            <person name="Alexandersson M."/>
            <person name="Trask B.J."/>
            <person name="Young J.M."/>
            <person name="Huang H."/>
            <person name="Wang H."/>
            <person name="Xing H."/>
            <person name="Daniels S."/>
            <person name="Gietzen D."/>
            <person name="Schmidt J."/>
            <person name="Stevens K."/>
            <person name="Vitt U."/>
            <person name="Wingrove J."/>
            <person name="Camara F."/>
            <person name="Mar Alba M."/>
            <person name="Abril J.F."/>
            <person name="Guigo R."/>
            <person name="Smit A."/>
            <person name="Dubchak I."/>
            <person name="Rubin E.M."/>
            <person name="Couronne O."/>
            <person name="Poliakov A."/>
            <person name="Huebner N."/>
            <person name="Ganten D."/>
            <person name="Goesele C."/>
            <person name="Hummel O."/>
            <person name="Kreitler T."/>
            <person name="Lee Y.-A."/>
            <person name="Monti J."/>
            <person name="Schulz H."/>
            <person name="Zimdahl H."/>
            <person name="Himmelbauer H."/>
            <person name="Lehrach H."/>
            <person name="Jacob H.J."/>
            <person name="Bromberg S."/>
            <person name="Gullings-Handley J."/>
            <person name="Jensen-Seaman M.I."/>
            <person name="Kwitek A.E."/>
            <person name="Lazar J."/>
            <person name="Pasko D."/>
            <person name="Tonellato P.J."/>
            <person name="Twigger S."/>
            <person name="Ponting C.P."/>
            <person name="Duarte J.M."/>
            <person name="Rice S."/>
            <person name="Goodstadt L."/>
            <person name="Beatson S.A."/>
            <person name="Emes R.D."/>
            <person name="Winter E.E."/>
            <person name="Webber C."/>
            <person name="Brandt P."/>
            <person name="Nyakatura G."/>
            <person name="Adetobi M."/>
            <person name="Chiaromonte F."/>
            <person name="Elnitski L."/>
            <person name="Eswara P."/>
            <person name="Hardison R.C."/>
            <person name="Hou M."/>
            <person name="Kolbe D."/>
            <person name="Makova K."/>
            <person name="Miller W."/>
            <person name="Nekrutenko A."/>
            <person name="Riemer C."/>
            <person name="Schwartz S."/>
            <person name="Taylor J."/>
            <person name="Yang S."/>
            <person name="Zhang Y."/>
            <person name="Lindpaintner K."/>
            <person name="Andrews T.D."/>
            <person name="Caccamo M."/>
            <person name="Clamp M."/>
            <person name="Clarke L."/>
            <person name="Curwen V."/>
            <person name="Durbin R.M."/>
            <person name="Eyras E."/>
            <person name="Searle S.M."/>
            <person name="Cooper G.M."/>
            <person name="Batzoglou S."/>
            <person name="Brudno M."/>
            <person name="Sidow A."/>
            <person name="Stone E.A."/>
            <person name="Payseur B.A."/>
            <person name="Bourque G."/>
            <person name="Lopez-Otin C."/>
            <person name="Puente X.S."/>
            <person name="Chakrabarti K."/>
            <person name="Chatterji S."/>
            <person name="Dewey C."/>
            <person name="Pachter L."/>
            <person name="Bray N."/>
            <person name="Yap V.B."/>
            <person name="Caspi A."/>
            <person name="Tesler G."/>
            <person name="Pevzner P.A."/>
            <person name="Haussler D."/>
            <person name="Roskin K.M."/>
            <person name="Baertsch R."/>
            <person name="Clawson H."/>
            <person name="Furey T.S."/>
            <person name="Hinrichs A.S."/>
            <person name="Karolchik D."/>
            <person name="Kent W.J."/>
            <person name="Rosenbloom K.R."/>
            <person name="Trumbower H."/>
            <person name="Weirauch M."/>
            <person name="Cooper D.N."/>
            <person name="Stenson P.D."/>
            <person name="Ma B."/>
            <person name="Brent M."/>
            <person name="Arumugam M."/>
            <person name="Shteynberg D."/>
            <person name="Copley R.R."/>
            <person name="Taylor M.S."/>
            <person name="Riethman H."/>
            <person name="Mudunuri U."/>
            <person name="Peterson J."/>
            <person name="Guyer M."/>
            <person name="Felsenfeld A."/>
            <person name="Old S."/>
            <person name="Mockrin S."/>
            <person name="Collins F.S."/>
        </authorList>
    </citation>
    <scope>NUCLEOTIDE SEQUENCE [LARGE SCALE GENOMIC DNA]</scope>
    <source>
        <strain>Brown Norway</strain>
    </source>
</reference>
<reference key="2">
    <citation type="journal article" date="2005" name="Biol. Reprod.">
        <title>Putative homeodomain transcription factor 1 interacts with the feminization factor homolog fem1b in male germ cells.</title>
        <authorList>
            <person name="Oyhenart J."/>
            <person name="Benichou S."/>
            <person name="Raich N."/>
        </authorList>
    </citation>
    <scope>SUBCELLULAR LOCATION</scope>
    <scope>TISSUE SPECIFICITY</scope>
    <scope>DEVELOPMENTAL STAGE</scope>
</reference>
<dbReference type="EMBL" id="AABR03062554">
    <property type="status" value="NOT_ANNOTATED_CDS"/>
    <property type="molecule type" value="Genomic_DNA"/>
</dbReference>
<dbReference type="RefSeq" id="NP_001101627.1">
    <property type="nucleotide sequence ID" value="NM_001108157.1"/>
</dbReference>
<dbReference type="SMR" id="P0C6P7"/>
<dbReference type="FunCoup" id="P0C6P7">
    <property type="interactions" value="4117"/>
</dbReference>
<dbReference type="STRING" id="10116.ENSRNOP00000009368"/>
<dbReference type="PhosphoSitePlus" id="P0C6P7"/>
<dbReference type="PaxDb" id="10116-ENSRNOP00000009368"/>
<dbReference type="Ensembl" id="ENSRNOT00000009368.7">
    <property type="protein sequence ID" value="ENSRNOP00000009368.5"/>
    <property type="gene ID" value="ENSRNOG00000007077.7"/>
</dbReference>
<dbReference type="GeneID" id="315745"/>
<dbReference type="KEGG" id="rno:315745"/>
<dbReference type="UCSC" id="RGD:1304569">
    <property type="organism name" value="rat"/>
</dbReference>
<dbReference type="AGR" id="RGD:1304569"/>
<dbReference type="CTD" id="10116"/>
<dbReference type="RGD" id="1304569">
    <property type="gene designation" value="Fem1b"/>
</dbReference>
<dbReference type="eggNOG" id="KOG0508">
    <property type="taxonomic scope" value="Eukaryota"/>
</dbReference>
<dbReference type="GeneTree" id="ENSGT00940000161115"/>
<dbReference type="HOGENOM" id="CLU_020042_1_0_1"/>
<dbReference type="InParanoid" id="P0C6P7"/>
<dbReference type="OMA" id="ISTKTTC"/>
<dbReference type="OrthoDB" id="4429489at2759"/>
<dbReference type="PhylomeDB" id="P0C6P7"/>
<dbReference type="TreeFam" id="TF351376"/>
<dbReference type="Reactome" id="R-RNO-8951664">
    <property type="pathway name" value="Neddylation"/>
</dbReference>
<dbReference type="UniPathway" id="UPA00143"/>
<dbReference type="PRO" id="PR:P0C6P7"/>
<dbReference type="Proteomes" id="UP000002494">
    <property type="component" value="Chromosome 8"/>
</dbReference>
<dbReference type="Bgee" id="ENSRNOG00000007077">
    <property type="expression patterns" value="Expressed in testis and 18 other cell types or tissues"/>
</dbReference>
<dbReference type="GO" id="GO:0031462">
    <property type="term" value="C:Cul2-RING ubiquitin ligase complex"/>
    <property type="evidence" value="ECO:0000250"/>
    <property type="project" value="UniProtKB"/>
</dbReference>
<dbReference type="GO" id="GO:0005737">
    <property type="term" value="C:cytoplasm"/>
    <property type="evidence" value="ECO:0000250"/>
    <property type="project" value="UniProtKB"/>
</dbReference>
<dbReference type="GO" id="GO:0005829">
    <property type="term" value="C:cytosol"/>
    <property type="evidence" value="ECO:0007669"/>
    <property type="project" value="Ensembl"/>
</dbReference>
<dbReference type="GO" id="GO:0005654">
    <property type="term" value="C:nucleoplasm"/>
    <property type="evidence" value="ECO:0007669"/>
    <property type="project" value="Ensembl"/>
</dbReference>
<dbReference type="GO" id="GO:0005634">
    <property type="term" value="C:nucleus"/>
    <property type="evidence" value="ECO:0000250"/>
    <property type="project" value="UniProtKB"/>
</dbReference>
<dbReference type="GO" id="GO:0000151">
    <property type="term" value="C:ubiquitin ligase complex"/>
    <property type="evidence" value="ECO:0000318"/>
    <property type="project" value="GO_Central"/>
</dbReference>
<dbReference type="GO" id="GO:0005123">
    <property type="term" value="F:death receptor binding"/>
    <property type="evidence" value="ECO:0000266"/>
    <property type="project" value="RGD"/>
</dbReference>
<dbReference type="GO" id="GO:0046872">
    <property type="term" value="F:metal ion binding"/>
    <property type="evidence" value="ECO:0007669"/>
    <property type="project" value="UniProtKB-KW"/>
</dbReference>
<dbReference type="GO" id="GO:1990756">
    <property type="term" value="F:ubiquitin-like ligase-substrate adaptor activity"/>
    <property type="evidence" value="ECO:0000250"/>
    <property type="project" value="UniProtKB"/>
</dbReference>
<dbReference type="GO" id="GO:0006915">
    <property type="term" value="P:apoptotic process"/>
    <property type="evidence" value="ECO:0007669"/>
    <property type="project" value="UniProtKB-KW"/>
</dbReference>
<dbReference type="GO" id="GO:0060442">
    <property type="term" value="P:branching involved in prostate gland morphogenesis"/>
    <property type="evidence" value="ECO:0000266"/>
    <property type="project" value="RGD"/>
</dbReference>
<dbReference type="GO" id="GO:0002070">
    <property type="term" value="P:epithelial cell maturation"/>
    <property type="evidence" value="ECO:0000266"/>
    <property type="project" value="RGD"/>
</dbReference>
<dbReference type="GO" id="GO:0060743">
    <property type="term" value="P:epithelial cell maturation involved in prostate gland development"/>
    <property type="evidence" value="ECO:0000266"/>
    <property type="project" value="RGD"/>
</dbReference>
<dbReference type="GO" id="GO:0043161">
    <property type="term" value="P:proteasome-mediated ubiquitin-dependent protein catabolic process"/>
    <property type="evidence" value="ECO:0000250"/>
    <property type="project" value="UniProtKB"/>
</dbReference>
<dbReference type="GO" id="GO:0016567">
    <property type="term" value="P:protein ubiquitination"/>
    <property type="evidence" value="ECO:0000266"/>
    <property type="project" value="RGD"/>
</dbReference>
<dbReference type="GO" id="GO:2000001">
    <property type="term" value="P:regulation of DNA damage checkpoint"/>
    <property type="evidence" value="ECO:0000250"/>
    <property type="project" value="UniProtKB"/>
</dbReference>
<dbReference type="GO" id="GO:1902041">
    <property type="term" value="P:regulation of extrinsic apoptotic signaling pathway via death domain receptors"/>
    <property type="evidence" value="ECO:0000266"/>
    <property type="project" value="RGD"/>
</dbReference>
<dbReference type="GO" id="GO:0140627">
    <property type="term" value="P:ubiquitin-dependent protein catabolic process via the C-end degron rule pathway"/>
    <property type="evidence" value="ECO:0000250"/>
    <property type="project" value="UniProtKB"/>
</dbReference>
<dbReference type="FunFam" id="1.25.40.20:FF:000264">
    <property type="entry name" value="Fem-1 homolog B"/>
    <property type="match status" value="1"/>
</dbReference>
<dbReference type="FunFam" id="1.25.40.20:FF:000117">
    <property type="entry name" value="Protein fem-1 homolog B"/>
    <property type="match status" value="1"/>
</dbReference>
<dbReference type="FunFam" id="1.25.40.20:FF:000202">
    <property type="entry name" value="Protein fem-1 homolog B"/>
    <property type="match status" value="1"/>
</dbReference>
<dbReference type="Gene3D" id="1.25.40.20">
    <property type="entry name" value="Ankyrin repeat-containing domain"/>
    <property type="match status" value="4"/>
</dbReference>
<dbReference type="InterPro" id="IPR002110">
    <property type="entry name" value="Ankyrin_rpt"/>
</dbReference>
<dbReference type="InterPro" id="IPR036770">
    <property type="entry name" value="Ankyrin_rpt-contain_sf"/>
</dbReference>
<dbReference type="PANTHER" id="PTHR24173">
    <property type="entry name" value="ANKYRIN REPEAT CONTAINING"/>
    <property type="match status" value="1"/>
</dbReference>
<dbReference type="PANTHER" id="PTHR24173:SF78">
    <property type="entry name" value="PROTEIN FEM-1 HOMOLOG B"/>
    <property type="match status" value="1"/>
</dbReference>
<dbReference type="Pfam" id="PF00023">
    <property type="entry name" value="Ank"/>
    <property type="match status" value="1"/>
</dbReference>
<dbReference type="Pfam" id="PF12796">
    <property type="entry name" value="Ank_2"/>
    <property type="match status" value="2"/>
</dbReference>
<dbReference type="PRINTS" id="PR01415">
    <property type="entry name" value="ANKYRIN"/>
</dbReference>
<dbReference type="SMART" id="SM00248">
    <property type="entry name" value="ANK"/>
    <property type="match status" value="8"/>
</dbReference>
<dbReference type="SUPFAM" id="SSF48403">
    <property type="entry name" value="Ankyrin repeat"/>
    <property type="match status" value="1"/>
</dbReference>
<dbReference type="PROSITE" id="PS50297">
    <property type="entry name" value="ANK_REP_REGION"/>
    <property type="match status" value="2"/>
</dbReference>
<dbReference type="PROSITE" id="PS50088">
    <property type="entry name" value="ANK_REPEAT"/>
    <property type="match status" value="6"/>
</dbReference>
<comment type="function">
    <text evidence="1 2">Substrate-recognition component of a Cul2-RING (CRL2) E3 ubiquitin-protein ligase complex of the DesCEND (destruction via C-end degrons) pathway, which recognizes a C-degron located at the extreme C terminus of target proteins, leading to their ubiquitination and degradation. The C-degron recognized by the DesCEND pathway is usually a motif of less than ten residues and can be present in full-length proteins, truncated proteins or proteolytically cleaved forms. The CRL2(FEM1B) complex specifically recognizes proteins ending with -Gly-Leu-Asp-Arg, such as CDK5R1, leading to their ubiquitination and degradation (By similarity). Also acts as a regulator of the reductive stress response by mediating ubiquitination of reduced FNIP1: in response to reductive stress, the CRL2(FEM1B) complex specifically recognizes a conserved Cys degron in FNIP1 when this degron is reduced, leading to FNIP1 degradation and subsequent activation of mitochondria to recalibrate reactive oxygen species (ROS) (By similarity). Mechanistically, recognizes and binds reduced FNIP1 through two interface zinc ions, which act as a molecular glue that recruit reduced FNIP1 to FEM1B (By similarity). Promotes ubiquitination of GLI1, suppressing GLI1 transcriptional activator activity (By similarity). Promotes ubiquitination and degradation of ANKRD37 (By similarity). Promotes ubiquitination and degradation of SLBP. Involved in apoptosis by acting as a death receptor-associated protein that mediates apoptosis (By similarity). Also involved in glucose homeostasis in pancreatic islet (By similarity). May also act as an adapter/mediator in replication stress-induced signaling that leads to the activation of CHEK1 (By similarity).</text>
</comment>
<comment type="activity regulation">
    <text evidence="2">Activity of the CRL2(FEM1B) complex toward FNIP1 is inhibited by BEX family proteins (BEX1, BEX2, BEX3 and/or BEX4) in absence of reductive stress. Mechanistically, BEX proteins act as pseudosubstrate inhibitors that associate with FEM1B via zinc in absence of reductive stress, thereby preventing association between FEM1B and FNIP1.</text>
</comment>
<comment type="pathway">
    <text evidence="1">Protein modification; protein ubiquitination.</text>
</comment>
<comment type="subunit">
    <text evidence="1 2">Component of a CRL2 E3 ubiquitin-protein ligase complex, also named ECS (Elongin BC-CUL2/5-SOCS-box protein) complex, composed of CUL2, Elongin BC (ELOB and ELOC), RBX1 and substrate-specific adapter FEM1B. Homooligomer. Interacts with PPM1F and PHTF1. Interacts with the death domain of FAS/TNFRSF6 and TNFRSF1A. Interacts with CHEK1 (By similarity). Interacts with NKX3-1 (By similarity).</text>
</comment>
<comment type="subcellular location">
    <subcellularLocation>
        <location evidence="3">Cytoplasm</location>
    </subcellularLocation>
    <subcellularLocation>
        <location evidence="1">Nucleus</location>
    </subcellularLocation>
    <text evidence="1">In the nucleus, the protein level increased slightly after camptothecin (CPT) treatment. Associated with chromatin.</text>
</comment>
<comment type="tissue specificity">
    <text evidence="3">Present in adult testis (at protein level).</text>
</comment>
<comment type="developmental stage">
    <text evidence="3">In testis, it is first observed in leptotene and early pachytene spermatocytes. Present at high level in pachytene spermatocytes at stage IX-X and persists throughout spermiogenesis. At spermiation, most of the protein is associated with the residual bodies, but some protein persists in the queues of mature spermatids.</text>
</comment>
<comment type="similarity">
    <text evidence="4">Belongs to the fem-1 family.</text>
</comment>
<gene>
    <name evidence="5" type="primary">Fem1b</name>
</gene>
<evidence type="ECO:0000250" key="1">
    <source>
        <dbReference type="UniProtKB" id="Q9UK73"/>
    </source>
</evidence>
<evidence type="ECO:0000250" key="2">
    <source>
        <dbReference type="UniProtKB" id="Q9Z2G0"/>
    </source>
</evidence>
<evidence type="ECO:0000269" key="3">
    <source>
    </source>
</evidence>
<evidence type="ECO:0000305" key="4"/>
<evidence type="ECO:0000312" key="5">
    <source>
        <dbReference type="RGD" id="1304569"/>
    </source>
</evidence>
<name>FEM1B_RAT</name>
<proteinExistence type="evidence at protein level"/>
<organism>
    <name type="scientific">Rattus norvegicus</name>
    <name type="common">Rat</name>
    <dbReference type="NCBI Taxonomy" id="10116"/>
    <lineage>
        <taxon>Eukaryota</taxon>
        <taxon>Metazoa</taxon>
        <taxon>Chordata</taxon>
        <taxon>Craniata</taxon>
        <taxon>Vertebrata</taxon>
        <taxon>Euteleostomi</taxon>
        <taxon>Mammalia</taxon>
        <taxon>Eutheria</taxon>
        <taxon>Euarchontoglires</taxon>
        <taxon>Glires</taxon>
        <taxon>Rodentia</taxon>
        <taxon>Myomorpha</taxon>
        <taxon>Muroidea</taxon>
        <taxon>Muridae</taxon>
        <taxon>Murinae</taxon>
        <taxon>Rattus</taxon>
    </lineage>
</organism>
<protein>
    <recommendedName>
        <fullName evidence="4">Protein fem-1 homolog B</fullName>
        <shortName evidence="1">FEM1b</shortName>
    </recommendedName>
    <alternativeName>
        <fullName>FEM1-beta</fullName>
    </alternativeName>
</protein>
<feature type="chain" id="PRO_0000324532" description="Protein fem-1 homolog B">
    <location>
        <begin position="1"/>
        <end position="627"/>
    </location>
</feature>
<feature type="repeat" description="ANK 1">
    <location>
        <begin position="45"/>
        <end position="74"/>
    </location>
</feature>
<feature type="repeat" description="ANK 2">
    <location>
        <begin position="87"/>
        <end position="116"/>
    </location>
</feature>
<feature type="repeat" description="ANK 3">
    <location>
        <begin position="120"/>
        <end position="149"/>
    </location>
</feature>
<feature type="repeat" description="ANK 4">
    <location>
        <begin position="153"/>
        <end position="182"/>
    </location>
</feature>
<feature type="repeat" description="ANK 5">
    <location>
        <begin position="186"/>
        <end position="215"/>
    </location>
</feature>
<feature type="repeat" description="ANK 6">
    <location>
        <begin position="218"/>
        <end position="248"/>
    </location>
</feature>
<feature type="repeat" description="TPR">
    <location>
        <begin position="344"/>
        <end position="377"/>
    </location>
</feature>
<feature type="repeat" description="ANK 7">
    <location>
        <begin position="483"/>
        <end position="527"/>
    </location>
</feature>
<feature type="repeat" description="ANK 8">
    <location>
        <begin position="531"/>
        <end position="568"/>
    </location>
</feature>
<feature type="binding site" evidence="2">
    <location>
        <position position="185"/>
    </location>
    <ligand>
        <name>Zn(2+)</name>
        <dbReference type="ChEBI" id="CHEBI:29105"/>
        <label>1</label>
        <note>ligand shared with FNIP1</note>
    </ligand>
</feature>
<feature type="binding site" evidence="2">
    <location>
        <position position="186"/>
    </location>
    <ligand>
        <name>Zn(2+)</name>
        <dbReference type="ChEBI" id="CHEBI:29105"/>
        <label>2</label>
        <note>ligand shared with FNIP1</note>
    </ligand>
</feature>
<feature type="binding site" evidence="2">
    <location>
        <position position="186"/>
    </location>
    <ligand>
        <name>Zn(2+)</name>
        <dbReference type="ChEBI" id="CHEBI:29105"/>
        <note>ligand shared with BEX proteins</note>
    </ligand>
</feature>
<feature type="binding site" evidence="2">
    <location>
        <position position="218"/>
    </location>
    <ligand>
        <name>Zn(2+)</name>
        <dbReference type="ChEBI" id="CHEBI:29105"/>
        <label>2</label>
        <note>ligand shared with FNIP1</note>
    </ligand>
</feature>
<feature type="site" description="Cleavage; by a caspase-3-like protease" evidence="1">
    <location>
        <begin position="342"/>
        <end position="343"/>
    </location>
</feature>
<keyword id="KW-0040">ANK repeat</keyword>
<keyword id="KW-0053">Apoptosis</keyword>
<keyword id="KW-0963">Cytoplasm</keyword>
<keyword id="KW-0479">Metal-binding</keyword>
<keyword id="KW-0539">Nucleus</keyword>
<keyword id="KW-1185">Reference proteome</keyword>
<keyword id="KW-0677">Repeat</keyword>
<keyword id="KW-0802">TPR repeat</keyword>
<keyword id="KW-0833">Ubl conjugation pathway</keyword>
<keyword id="KW-0862">Zinc</keyword>